<reference key="1">
    <citation type="submission" date="2008-04" db="EMBL/GenBank/DDBJ databases">
        <title>Complete sequence of chromosome of Methylobacterium populi BJ001.</title>
        <authorList>
            <consortium name="US DOE Joint Genome Institute"/>
            <person name="Copeland A."/>
            <person name="Lucas S."/>
            <person name="Lapidus A."/>
            <person name="Glavina del Rio T."/>
            <person name="Dalin E."/>
            <person name="Tice H."/>
            <person name="Bruce D."/>
            <person name="Goodwin L."/>
            <person name="Pitluck S."/>
            <person name="Chertkov O."/>
            <person name="Brettin T."/>
            <person name="Detter J.C."/>
            <person name="Han C."/>
            <person name="Kuske C.R."/>
            <person name="Schmutz J."/>
            <person name="Larimer F."/>
            <person name="Land M."/>
            <person name="Hauser L."/>
            <person name="Kyrpides N."/>
            <person name="Mikhailova N."/>
            <person name="Marx C."/>
            <person name="Richardson P."/>
        </authorList>
    </citation>
    <scope>NUCLEOTIDE SEQUENCE [LARGE SCALE GENOMIC DNA]</scope>
    <source>
        <strain>ATCC BAA-705 / NCIMB 13946 / BJ001</strain>
    </source>
</reference>
<evidence type="ECO:0000255" key="1">
    <source>
        <dbReference type="HAMAP-Rule" id="MF_00014"/>
    </source>
</evidence>
<evidence type="ECO:0000256" key="2">
    <source>
        <dbReference type="SAM" id="MobiDB-lite"/>
    </source>
</evidence>
<name>RIMM_METPB</name>
<dbReference type="EMBL" id="CP001029">
    <property type="protein sequence ID" value="ACB78811.1"/>
    <property type="molecule type" value="Genomic_DNA"/>
</dbReference>
<dbReference type="RefSeq" id="WP_012452567.1">
    <property type="nucleotide sequence ID" value="NC_010725.1"/>
</dbReference>
<dbReference type="SMR" id="B1ZL68"/>
<dbReference type="STRING" id="441620.Mpop_0633"/>
<dbReference type="KEGG" id="mpo:Mpop_0633"/>
<dbReference type="eggNOG" id="COG0806">
    <property type="taxonomic scope" value="Bacteria"/>
</dbReference>
<dbReference type="HOGENOM" id="CLU_077636_0_1_5"/>
<dbReference type="OrthoDB" id="9788191at2"/>
<dbReference type="Proteomes" id="UP000007136">
    <property type="component" value="Chromosome"/>
</dbReference>
<dbReference type="GO" id="GO:0005737">
    <property type="term" value="C:cytoplasm"/>
    <property type="evidence" value="ECO:0007669"/>
    <property type="project" value="UniProtKB-SubCell"/>
</dbReference>
<dbReference type="GO" id="GO:0005840">
    <property type="term" value="C:ribosome"/>
    <property type="evidence" value="ECO:0007669"/>
    <property type="project" value="InterPro"/>
</dbReference>
<dbReference type="GO" id="GO:0043022">
    <property type="term" value="F:ribosome binding"/>
    <property type="evidence" value="ECO:0007669"/>
    <property type="project" value="InterPro"/>
</dbReference>
<dbReference type="GO" id="GO:0042274">
    <property type="term" value="P:ribosomal small subunit biogenesis"/>
    <property type="evidence" value="ECO:0007669"/>
    <property type="project" value="UniProtKB-UniRule"/>
</dbReference>
<dbReference type="GO" id="GO:0006364">
    <property type="term" value="P:rRNA processing"/>
    <property type="evidence" value="ECO:0007669"/>
    <property type="project" value="UniProtKB-UniRule"/>
</dbReference>
<dbReference type="Gene3D" id="2.30.30.240">
    <property type="entry name" value="PRC-barrel domain"/>
    <property type="match status" value="1"/>
</dbReference>
<dbReference type="Gene3D" id="2.40.30.60">
    <property type="entry name" value="RimM"/>
    <property type="match status" value="1"/>
</dbReference>
<dbReference type="HAMAP" id="MF_00014">
    <property type="entry name" value="Ribosome_mat_RimM"/>
    <property type="match status" value="1"/>
</dbReference>
<dbReference type="InterPro" id="IPR011033">
    <property type="entry name" value="PRC_barrel-like_sf"/>
</dbReference>
<dbReference type="InterPro" id="IPR056792">
    <property type="entry name" value="PRC_RimM"/>
</dbReference>
<dbReference type="InterPro" id="IPR011961">
    <property type="entry name" value="RimM"/>
</dbReference>
<dbReference type="InterPro" id="IPR002676">
    <property type="entry name" value="RimM_N"/>
</dbReference>
<dbReference type="InterPro" id="IPR036976">
    <property type="entry name" value="RimM_N_sf"/>
</dbReference>
<dbReference type="InterPro" id="IPR009000">
    <property type="entry name" value="Transl_B-barrel_sf"/>
</dbReference>
<dbReference type="NCBIfam" id="TIGR02273">
    <property type="entry name" value="16S_RimM"/>
    <property type="match status" value="1"/>
</dbReference>
<dbReference type="PANTHER" id="PTHR33692">
    <property type="entry name" value="RIBOSOME MATURATION FACTOR RIMM"/>
    <property type="match status" value="1"/>
</dbReference>
<dbReference type="PANTHER" id="PTHR33692:SF1">
    <property type="entry name" value="RIBOSOME MATURATION FACTOR RIMM"/>
    <property type="match status" value="1"/>
</dbReference>
<dbReference type="Pfam" id="PF24986">
    <property type="entry name" value="PRC_RimM"/>
    <property type="match status" value="1"/>
</dbReference>
<dbReference type="Pfam" id="PF01782">
    <property type="entry name" value="RimM"/>
    <property type="match status" value="1"/>
</dbReference>
<dbReference type="SUPFAM" id="SSF50346">
    <property type="entry name" value="PRC-barrel domain"/>
    <property type="match status" value="1"/>
</dbReference>
<dbReference type="SUPFAM" id="SSF50447">
    <property type="entry name" value="Translation proteins"/>
    <property type="match status" value="1"/>
</dbReference>
<sequence length="224" mass="23216">MARRPGSSSRGPARPDRLAPQAVTSARRPQTPDKSPKPASPDPSLVLLGEFGRPHGLHGEVRLKSFTGEPLAIAGYGPLHASDGRTLELEDARPAPGGSPDLLIVRVKGVDNRSGAEALNRITLAIARERLGQAEDEDEFFLTDLIGLAVEDPSGTVIGTIVAVPNYGGGDLLEIRPAAGGPTALLPFTKAFVPTLDLAGGKVVADPPEDLFAPPGPKPADDPG</sequence>
<protein>
    <recommendedName>
        <fullName evidence="1">Ribosome maturation factor RimM</fullName>
    </recommendedName>
</protein>
<gene>
    <name evidence="1" type="primary">rimM</name>
    <name type="ordered locus">Mpop_0633</name>
</gene>
<comment type="function">
    <text evidence="1">An accessory protein needed during the final step in the assembly of 30S ribosomal subunit, possibly for assembly of the head region. Essential for efficient processing of 16S rRNA. May be needed both before and after RbfA during the maturation of 16S rRNA. It has affinity for free ribosomal 30S subunits but not for 70S ribosomes.</text>
</comment>
<comment type="subunit">
    <text evidence="1">Binds ribosomal protein uS19.</text>
</comment>
<comment type="subcellular location">
    <subcellularLocation>
        <location evidence="1">Cytoplasm</location>
    </subcellularLocation>
</comment>
<comment type="domain">
    <text evidence="1">The PRC barrel domain binds ribosomal protein uS19.</text>
</comment>
<comment type="similarity">
    <text evidence="1">Belongs to the RimM family.</text>
</comment>
<feature type="chain" id="PRO_0000351776" description="Ribosome maturation factor RimM">
    <location>
        <begin position="1"/>
        <end position="224"/>
    </location>
</feature>
<feature type="domain" description="PRC barrel" evidence="1">
    <location>
        <begin position="137"/>
        <end position="211"/>
    </location>
</feature>
<feature type="region of interest" description="Disordered" evidence="2">
    <location>
        <begin position="1"/>
        <end position="46"/>
    </location>
</feature>
<feature type="region of interest" description="Disordered" evidence="2">
    <location>
        <begin position="204"/>
        <end position="224"/>
    </location>
</feature>
<feature type="compositionally biased region" description="Low complexity" evidence="2">
    <location>
        <begin position="1"/>
        <end position="12"/>
    </location>
</feature>
<accession>B1ZL68</accession>
<organism>
    <name type="scientific">Methylorubrum populi (strain ATCC BAA-705 / NCIMB 13946 / BJ001)</name>
    <name type="common">Methylobacterium populi</name>
    <dbReference type="NCBI Taxonomy" id="441620"/>
    <lineage>
        <taxon>Bacteria</taxon>
        <taxon>Pseudomonadati</taxon>
        <taxon>Pseudomonadota</taxon>
        <taxon>Alphaproteobacteria</taxon>
        <taxon>Hyphomicrobiales</taxon>
        <taxon>Methylobacteriaceae</taxon>
        <taxon>Methylorubrum</taxon>
    </lineage>
</organism>
<proteinExistence type="inferred from homology"/>
<keyword id="KW-0143">Chaperone</keyword>
<keyword id="KW-0963">Cytoplasm</keyword>
<keyword id="KW-0690">Ribosome biogenesis</keyword>
<keyword id="KW-0698">rRNA processing</keyword>